<protein>
    <recommendedName>
        <fullName>Bacteriorhodopsin-I</fullName>
        <shortName>HwBR</shortName>
    </recommendedName>
    <alternativeName>
        <fullName>Squarebop I</fullName>
    </alternativeName>
</protein>
<proteinExistence type="evidence at protein level"/>
<dbReference type="EMBL" id="AM180088">
    <property type="protein sequence ID" value="CAJ51144.1"/>
    <property type="molecule type" value="Genomic_DNA"/>
</dbReference>
<dbReference type="RefSeq" id="WP_011570311.1">
    <property type="nucleotide sequence ID" value="NC_008212.1"/>
</dbReference>
<dbReference type="PDB" id="4QI1">
    <property type="method" value="X-ray"/>
    <property type="resolution" value="1.85 A"/>
    <property type="chains" value="A/B/C=3-254"/>
</dbReference>
<dbReference type="PDB" id="4QID">
    <property type="method" value="X-ray"/>
    <property type="resolution" value="2.57 A"/>
    <property type="chains" value="A/B=3-254"/>
</dbReference>
<dbReference type="PDB" id="5ITC">
    <property type="method" value="X-ray"/>
    <property type="resolution" value="2.00 A"/>
    <property type="chains" value="A/B/C=3-254"/>
</dbReference>
<dbReference type="PDB" id="5ITE">
    <property type="method" value="X-ray"/>
    <property type="resolution" value="2.18 A"/>
    <property type="chains" value="A/B/C=3-254"/>
</dbReference>
<dbReference type="PDB" id="5KKH">
    <property type="method" value="X-ray"/>
    <property type="resolution" value="2.12 A"/>
    <property type="chains" value="A/B/C=1-254"/>
</dbReference>
<dbReference type="PDBsum" id="4QI1"/>
<dbReference type="PDBsum" id="4QID"/>
<dbReference type="PDBsum" id="5ITC"/>
<dbReference type="PDBsum" id="5ITE"/>
<dbReference type="PDBsum" id="5KKH"/>
<dbReference type="SMR" id="Q18DH8"/>
<dbReference type="STRING" id="362976.HQ_1014A"/>
<dbReference type="GeneID" id="4193772"/>
<dbReference type="KEGG" id="hwa:HQ_1014A"/>
<dbReference type="eggNOG" id="arCOG02812">
    <property type="taxonomic scope" value="Archaea"/>
</dbReference>
<dbReference type="HOGENOM" id="CLU_054785_5_1_2"/>
<dbReference type="EvolutionaryTrace" id="Q18DH8"/>
<dbReference type="Proteomes" id="UP000001975">
    <property type="component" value="Chromosome"/>
</dbReference>
<dbReference type="GO" id="GO:0005886">
    <property type="term" value="C:plasma membrane"/>
    <property type="evidence" value="ECO:0007669"/>
    <property type="project" value="UniProtKB-SubCell"/>
</dbReference>
<dbReference type="GO" id="GO:0005216">
    <property type="term" value="F:monoatomic ion channel activity"/>
    <property type="evidence" value="ECO:0007669"/>
    <property type="project" value="InterPro"/>
</dbReference>
<dbReference type="GO" id="GO:0009881">
    <property type="term" value="F:photoreceptor activity"/>
    <property type="evidence" value="ECO:0007669"/>
    <property type="project" value="UniProtKB-KW"/>
</dbReference>
<dbReference type="GO" id="GO:0007602">
    <property type="term" value="P:phototransduction"/>
    <property type="evidence" value="ECO:0007669"/>
    <property type="project" value="UniProtKB-KW"/>
</dbReference>
<dbReference type="GO" id="GO:1902600">
    <property type="term" value="P:proton transmembrane transport"/>
    <property type="evidence" value="ECO:0007669"/>
    <property type="project" value="UniProtKB-KW"/>
</dbReference>
<dbReference type="CDD" id="cd15244">
    <property type="entry name" value="7tm_bacteriorhodopsin"/>
    <property type="match status" value="1"/>
</dbReference>
<dbReference type="Gene3D" id="1.20.1070.10">
    <property type="entry name" value="Rhodopsin 7-helix transmembrane proteins"/>
    <property type="match status" value="1"/>
</dbReference>
<dbReference type="InterPro" id="IPR001425">
    <property type="entry name" value="Arc/bac/fun_rhodopsins"/>
</dbReference>
<dbReference type="InterPro" id="IPR018229">
    <property type="entry name" value="Rhodopsin_retinal_BS"/>
</dbReference>
<dbReference type="PANTHER" id="PTHR28286">
    <property type="match status" value="1"/>
</dbReference>
<dbReference type="PANTHER" id="PTHR28286:SF2">
    <property type="entry name" value="BACTERIORHODOPSIN _OPSIN, NOPA (EUROFUNG)"/>
    <property type="match status" value="1"/>
</dbReference>
<dbReference type="Pfam" id="PF01036">
    <property type="entry name" value="Bac_rhodopsin"/>
    <property type="match status" value="1"/>
</dbReference>
<dbReference type="PRINTS" id="PR00251">
    <property type="entry name" value="BACTRLOPSIN"/>
</dbReference>
<dbReference type="SMART" id="SM01021">
    <property type="entry name" value="Bac_rhodopsin"/>
    <property type="match status" value="1"/>
</dbReference>
<dbReference type="SUPFAM" id="SSF81321">
    <property type="entry name" value="Family A G protein-coupled receptor-like"/>
    <property type="match status" value="1"/>
</dbReference>
<dbReference type="PROSITE" id="PS00950">
    <property type="entry name" value="BACTERIAL_OPSIN_1"/>
    <property type="match status" value="1"/>
</dbReference>
<dbReference type="PROSITE" id="PS00327">
    <property type="entry name" value="BACTERIAL_OPSIN_RET"/>
    <property type="match status" value="1"/>
</dbReference>
<sequence length="254" mass="27423">MSQLALQMSSLGVEGEGIWLALGTIGMLLGMLYFIADGLDVQDPRQKEFYVITILIPAIAAASYLSMFFGFGLTEVSLANGRVVDVYWARYADWLFTTPLLLLDIGLLAGASQRDIGALVGIDAFMIVTGLVATLTKVVVARYAFWTISTISMVFLLYYLVAVFGEAVSDADEDTRSTFNALRNIILVTWAIYPVAWLVGTEGLALTGLYGETLLFMVLDLVAKVGFGFILLRSRAIMGGGSEPTPSAQETAAD</sequence>
<reference key="1">
    <citation type="journal article" date="2006" name="BMC Genomics">
        <title>The genome of the square archaeon Haloquadratum walsbyi: life at the limits of water activity.</title>
        <authorList>
            <person name="Bolhuis H."/>
            <person name="Palm P."/>
            <person name="Wende A."/>
            <person name="Falb M."/>
            <person name="Rampp M."/>
            <person name="Rodriguez-Valera F."/>
            <person name="Pfeiffer F."/>
            <person name="Oesterhelt D."/>
        </authorList>
    </citation>
    <scope>NUCLEOTIDE SEQUENCE [LARGE SCALE GENOMIC DNA]</scope>
    <source>
        <strain>DSM 16790 / HBSQ001</strain>
    </source>
</reference>
<reference key="2">
    <citation type="journal article" date="2011" name="J. Biol. Chem.">
        <title>A microbial rhodopsin with a unique retinal composition shows both sensory rhodopsin II and bacteriorhodopsin-like properties.</title>
        <authorList>
            <person name="Sudo Y."/>
            <person name="Ihara K."/>
            <person name="Kobayashi S."/>
            <person name="Suzuki D."/>
            <person name="Irieda H."/>
            <person name="Kikukawa T."/>
            <person name="Kandori H."/>
            <person name="Homma M."/>
        </authorList>
    </citation>
    <scope>FUNCTION</scope>
    <scope>BIOPHYSICOCHEMICAL PROPERTIES</scope>
</reference>
<reference key="3">
    <citation type="journal article" date="2012" name="Photochem. Photobiol.">
        <title>The light-activated proton pump Bop I of the archaeon Haloquadratum walsbyi.</title>
        <authorList>
            <person name="Lobasso S."/>
            <person name="Lopalco P."/>
            <person name="Vitale R."/>
            <person name="Saponetti M.S."/>
            <person name="Capitanio G."/>
            <person name="Mangini V."/>
            <person name="Milano F."/>
            <person name="Trotta M."/>
            <person name="Corcelli A."/>
        </authorList>
    </citation>
    <scope>FUNCTION</scope>
    <scope>BIOPHYSICOCHEMICAL PROPERTIES</scope>
    <scope>SUBCELLULAR LOCATION</scope>
</reference>
<reference key="4">
    <citation type="journal article" date="2013" name="J. Biol. Chem.">
        <title>A blue-shifted light-driven proton pump for neural silencing.</title>
        <authorList>
            <person name="Sudo Y."/>
            <person name="Okazaki A."/>
            <person name="Ono H."/>
            <person name="Yagasaki J."/>
            <person name="Sugo S."/>
            <person name="Kamiya M."/>
            <person name="Reissig L."/>
            <person name="Inoue K."/>
            <person name="Ihara K."/>
            <person name="Kandori H."/>
            <person name="Takagi S."/>
            <person name="Hayashi S."/>
        </authorList>
    </citation>
    <scope>FUNCTION</scope>
    <scope>MUTAGENESIS OF MET-126; SER-149 AND ALA-223</scope>
</reference>
<name>BACR1_HALWD</name>
<feature type="propeptide" id="PRO_0000428846" evidence="1">
    <location>
        <begin position="1"/>
        <end position="6"/>
    </location>
</feature>
<feature type="chain" id="PRO_0000428847" description="Bacteriorhodopsin-I">
    <location>
        <begin position="7"/>
        <end position="254"/>
    </location>
</feature>
<feature type="transmembrane region" description="Helical" evidence="2">
    <location>
        <begin position="16"/>
        <end position="36"/>
    </location>
</feature>
<feature type="transmembrane region" description="Helical" evidence="2">
    <location>
        <begin position="51"/>
        <end position="71"/>
    </location>
</feature>
<feature type="transmembrane region" description="Helical" evidence="2">
    <location>
        <begin position="91"/>
        <end position="111"/>
    </location>
</feature>
<feature type="transmembrane region" description="Helical" evidence="2">
    <location>
        <begin position="116"/>
        <end position="136"/>
    </location>
</feature>
<feature type="transmembrane region" description="Helical" evidence="2">
    <location>
        <begin position="144"/>
        <end position="164"/>
    </location>
</feature>
<feature type="transmembrane region" description="Helical" evidence="2">
    <location>
        <begin position="185"/>
        <end position="205"/>
    </location>
</feature>
<feature type="transmembrane region" description="Helical" evidence="2">
    <location>
        <begin position="212"/>
        <end position="232"/>
    </location>
</feature>
<feature type="site" description="Primary proton acceptor" evidence="1">
    <location>
        <position position="93"/>
    </location>
</feature>
<feature type="modified residue" description="Pyrrolidone carboxylic acid" evidence="1">
    <location>
        <position position="7"/>
    </location>
</feature>
<feature type="modified residue" description="N6-(retinylidene)lysine" evidence="1">
    <location>
        <position position="224"/>
    </location>
</feature>
<feature type="mutagenesis site" description="Large spectral blue shift, but no effect on pumping activity; when associated with A-149 and T-223." evidence="5">
    <original>M</original>
    <variation>A</variation>
    <location>
        <position position="126"/>
    </location>
</feature>
<feature type="mutagenesis site" description="Large spectral blue shift, but no effect on pumping activity; when associated with A-126 and T-223." evidence="5">
    <original>S</original>
    <variation>A</variation>
    <location>
        <position position="149"/>
    </location>
</feature>
<feature type="mutagenesis site" description="Large spectral blue shift, but no effect on pumping activity; when associated with A-126 and A-149." evidence="5">
    <original>A</original>
    <variation>T</variation>
    <location>
        <position position="223"/>
    </location>
</feature>
<feature type="strand" evidence="8">
    <location>
        <begin position="13"/>
        <end position="15"/>
    </location>
</feature>
<feature type="helix" evidence="8">
    <location>
        <begin position="17"/>
        <end position="38"/>
    </location>
</feature>
<feature type="helix" evidence="8">
    <location>
        <begin position="44"/>
        <end position="68"/>
    </location>
</feature>
<feature type="turn" evidence="8">
    <location>
        <begin position="69"/>
        <end position="72"/>
    </location>
</feature>
<feature type="strand" evidence="8">
    <location>
        <begin position="73"/>
        <end position="77"/>
    </location>
</feature>
<feature type="strand" evidence="8">
    <location>
        <begin position="83"/>
        <end position="87"/>
    </location>
</feature>
<feature type="helix" evidence="8">
    <location>
        <begin position="89"/>
        <end position="109"/>
    </location>
</feature>
<feature type="helix" evidence="8">
    <location>
        <begin position="113"/>
        <end position="135"/>
    </location>
</feature>
<feature type="helix" evidence="8">
    <location>
        <begin position="139"/>
        <end position="168"/>
    </location>
</feature>
<feature type="helix" evidence="8">
    <location>
        <begin position="173"/>
        <end position="199"/>
    </location>
</feature>
<feature type="turn" evidence="8">
    <location>
        <begin position="201"/>
        <end position="204"/>
    </location>
</feature>
<feature type="helix" evidence="8">
    <location>
        <begin position="209"/>
        <end position="232"/>
    </location>
</feature>
<feature type="helix" evidence="8">
    <location>
        <begin position="235"/>
        <end position="237"/>
    </location>
</feature>
<comment type="function">
    <text evidence="3 4 5">Light-driven proton pump. The chromophore contains 78% all-trans- and 22% 13-cis-retinal in the dark and 90% all-trans- and 10% 13-cis-retinal upon illumination with &gt;500 nm light.</text>
</comment>
<comment type="biophysicochemical properties">
    <absorption>
        <max evidence="3 4">552 nm</max>
        <text>In light-adapted form, max=555 nm. In the mutated form, max=498 nm.</text>
    </absorption>
</comment>
<comment type="subcellular location">
    <subcellularLocation>
        <location evidence="4">Cell membrane</location>
        <topology evidence="4">Multi-pass membrane protein</topology>
    </subcellularLocation>
</comment>
<comment type="PTM">
    <text evidence="1">The covalent binding of retinal to the apoprotein, bacterioopsin, generates bacteriorhodopsin.</text>
</comment>
<comment type="miscellaneous">
    <text evidence="7">Different protein aggregation states can be observed, leading to variations in the absorbance maxima.</text>
</comment>
<comment type="similarity">
    <text evidence="6">Belongs to the archaeal/bacterial/fungal opsin family.</text>
</comment>
<comment type="caution">
    <text evidence="6">Is called bop2 in PubMed:21135094.</text>
</comment>
<keyword id="KW-0002">3D-structure</keyword>
<keyword id="KW-1003">Cell membrane</keyword>
<keyword id="KW-0157">Chromophore</keyword>
<keyword id="KW-0375">Hydrogen ion transport</keyword>
<keyword id="KW-0406">Ion transport</keyword>
<keyword id="KW-0472">Membrane</keyword>
<keyword id="KW-0600">Photoreceptor protein</keyword>
<keyword id="KW-0873">Pyrrolidone carboxylic acid</keyword>
<keyword id="KW-0675">Receptor</keyword>
<keyword id="KW-1185">Reference proteome</keyword>
<keyword id="KW-0681">Retinal protein</keyword>
<keyword id="KW-0716">Sensory transduction</keyword>
<keyword id="KW-0812">Transmembrane</keyword>
<keyword id="KW-1133">Transmembrane helix</keyword>
<keyword id="KW-0813">Transport</keyword>
<organism>
    <name type="scientific">Haloquadratum walsbyi (strain DSM 16790 / HBSQ001)</name>
    <dbReference type="NCBI Taxonomy" id="362976"/>
    <lineage>
        <taxon>Archaea</taxon>
        <taxon>Methanobacteriati</taxon>
        <taxon>Methanobacteriota</taxon>
        <taxon>Stenosarchaea group</taxon>
        <taxon>Halobacteria</taxon>
        <taxon>Halobacteriales</taxon>
        <taxon>Haloferacaceae</taxon>
        <taxon>Haloquadratum</taxon>
    </lineage>
</organism>
<gene>
    <name type="primary">bop1</name>
    <name type="synonym">bopI</name>
    <name type="ordered locus">HQ_1014A</name>
</gene>
<evidence type="ECO:0000250" key="1"/>
<evidence type="ECO:0000255" key="2"/>
<evidence type="ECO:0000269" key="3">
    <source>
    </source>
</evidence>
<evidence type="ECO:0000269" key="4">
    <source>
    </source>
</evidence>
<evidence type="ECO:0000269" key="5">
    <source>
    </source>
</evidence>
<evidence type="ECO:0000305" key="6"/>
<evidence type="ECO:0000305" key="7">
    <source>
    </source>
</evidence>
<evidence type="ECO:0007829" key="8">
    <source>
        <dbReference type="PDB" id="4QI1"/>
    </source>
</evidence>
<accession>Q18DH8</accession>